<protein>
    <recommendedName>
        <fullName>U2 small nuclear ribonucleoprotein A'</fullName>
        <shortName>U2 snRNP A'</shortName>
    </recommendedName>
</protein>
<evidence type="ECO:0000250" key="1">
    <source>
        <dbReference type="UniProtKB" id="P09661"/>
    </source>
</evidence>
<evidence type="ECO:0000256" key="2">
    <source>
        <dbReference type="SAM" id="MobiDB-lite"/>
    </source>
</evidence>
<evidence type="ECO:0000305" key="3"/>
<dbReference type="EMBL" id="AB168309">
    <property type="protein sequence ID" value="BAE00433.1"/>
    <property type="molecule type" value="mRNA"/>
</dbReference>
<dbReference type="RefSeq" id="NP_001270272.1">
    <property type="nucleotide sequence ID" value="NM_001283343.1"/>
</dbReference>
<dbReference type="RefSeq" id="XP_045252003.1">
    <property type="nucleotide sequence ID" value="XM_045396068.2"/>
</dbReference>
<dbReference type="SMR" id="Q4R8Y8"/>
<dbReference type="STRING" id="9541.ENSMFAP00000012116"/>
<dbReference type="Ensembl" id="ENSMFAT00000055442.2">
    <property type="protein sequence ID" value="ENSMFAP00000012116.1"/>
    <property type="gene ID" value="ENSMFAG00000021023.2"/>
</dbReference>
<dbReference type="GeneID" id="101925415"/>
<dbReference type="VEuPathDB" id="HostDB:ENSMFAG00000021023"/>
<dbReference type="eggNOG" id="KOG1644">
    <property type="taxonomic scope" value="Eukaryota"/>
</dbReference>
<dbReference type="GeneTree" id="ENSGT00940000153289"/>
<dbReference type="OMA" id="PNYREYM"/>
<dbReference type="Proteomes" id="UP000233100">
    <property type="component" value="Chromosome 7"/>
</dbReference>
<dbReference type="Bgee" id="ENSMFAG00000021023">
    <property type="expression patterns" value="Expressed in lymph node and 13 other cell types or tissues"/>
</dbReference>
<dbReference type="GO" id="GO:0005634">
    <property type="term" value="C:nucleus"/>
    <property type="evidence" value="ECO:0000250"/>
    <property type="project" value="UniProtKB"/>
</dbReference>
<dbReference type="GO" id="GO:0005686">
    <property type="term" value="C:U2 snRNP"/>
    <property type="evidence" value="ECO:0007669"/>
    <property type="project" value="TreeGrafter"/>
</dbReference>
<dbReference type="GO" id="GO:0071007">
    <property type="term" value="C:U2-type catalytic step 2 spliceosome"/>
    <property type="evidence" value="ECO:0000250"/>
    <property type="project" value="UniProtKB"/>
</dbReference>
<dbReference type="GO" id="GO:0005684">
    <property type="term" value="C:U2-type spliceosomal complex"/>
    <property type="evidence" value="ECO:0000250"/>
    <property type="project" value="UniProtKB"/>
</dbReference>
<dbReference type="GO" id="GO:0030620">
    <property type="term" value="F:U2 snRNA binding"/>
    <property type="evidence" value="ECO:0007669"/>
    <property type="project" value="InterPro"/>
</dbReference>
<dbReference type="GO" id="GO:0000398">
    <property type="term" value="P:mRNA splicing, via spliceosome"/>
    <property type="evidence" value="ECO:0000250"/>
    <property type="project" value="UniProtKB"/>
</dbReference>
<dbReference type="FunFam" id="3.80.10.10:FF:000026">
    <property type="entry name" value="U2 small nuclear ribonucleoprotein A"/>
    <property type="match status" value="1"/>
</dbReference>
<dbReference type="Gene3D" id="3.80.10.10">
    <property type="entry name" value="Ribonuclease Inhibitor"/>
    <property type="match status" value="1"/>
</dbReference>
<dbReference type="InterPro" id="IPR001611">
    <property type="entry name" value="Leu-rich_rpt"/>
</dbReference>
<dbReference type="InterPro" id="IPR032675">
    <property type="entry name" value="LRR_dom_sf"/>
</dbReference>
<dbReference type="InterPro" id="IPR044640">
    <property type="entry name" value="RU2A"/>
</dbReference>
<dbReference type="InterPro" id="IPR003603">
    <property type="entry name" value="U2A'_phosphoprotein32A_C"/>
</dbReference>
<dbReference type="PANTHER" id="PTHR10552">
    <property type="entry name" value="U2 SMALL NUCLEAR RIBONUCLEOPROTEIN A"/>
    <property type="match status" value="1"/>
</dbReference>
<dbReference type="PANTHER" id="PTHR10552:SF6">
    <property type="entry name" value="U2 SMALL NUCLEAR RIBONUCLEOPROTEIN A"/>
    <property type="match status" value="1"/>
</dbReference>
<dbReference type="Pfam" id="PF14580">
    <property type="entry name" value="LRR_9"/>
    <property type="match status" value="1"/>
</dbReference>
<dbReference type="SMART" id="SM00446">
    <property type="entry name" value="LRRcap"/>
    <property type="match status" value="1"/>
</dbReference>
<dbReference type="SUPFAM" id="SSF52058">
    <property type="entry name" value="L domain-like"/>
    <property type="match status" value="1"/>
</dbReference>
<dbReference type="PROSITE" id="PS51450">
    <property type="entry name" value="LRR"/>
    <property type="match status" value="4"/>
</dbReference>
<feature type="chain" id="PRO_0000074174" description="U2 small nuclear ribonucleoprotein A'">
    <location>
        <begin position="1"/>
        <end position="255"/>
    </location>
</feature>
<feature type="repeat" description="LRR 1">
    <location>
        <begin position="20"/>
        <end position="41"/>
    </location>
</feature>
<feature type="repeat" description="LRR 2">
    <location>
        <begin position="43"/>
        <end position="64"/>
    </location>
</feature>
<feature type="repeat" description="LRR 3">
    <location>
        <begin position="65"/>
        <end position="86"/>
    </location>
</feature>
<feature type="repeat" description="LRR 4">
    <location>
        <begin position="89"/>
        <end position="110"/>
    </location>
</feature>
<feature type="domain" description="LRRCT">
    <location>
        <begin position="123"/>
        <end position="161"/>
    </location>
</feature>
<feature type="region of interest" description="Disordered" evidence="2">
    <location>
        <begin position="174"/>
        <end position="201"/>
    </location>
</feature>
<feature type="region of interest" description="Disordered" evidence="2">
    <location>
        <begin position="222"/>
        <end position="255"/>
    </location>
</feature>
<feature type="compositionally biased region" description="Acidic residues" evidence="2">
    <location>
        <begin position="240"/>
        <end position="255"/>
    </location>
</feature>
<feature type="modified residue" description="N6-acetyllysine; alternate" evidence="1">
    <location>
        <position position="172"/>
    </location>
</feature>
<feature type="modified residue" description="Phosphoserine" evidence="1">
    <location>
        <position position="178"/>
    </location>
</feature>
<feature type="modified residue" description="Phosphoserine" evidence="1">
    <location>
        <position position="197"/>
    </location>
</feature>
<feature type="modified residue" description="Phosphoserine" evidence="1">
    <location>
        <position position="236"/>
    </location>
</feature>
<feature type="modified residue" description="Phosphoserine" evidence="1">
    <location>
        <position position="255"/>
    </location>
</feature>
<feature type="cross-link" description="Glycyl lysine isopeptide (Lys-Gly) (interchain with G-Cter in SUMO2); alternate" evidence="1">
    <location>
        <position position="172"/>
    </location>
</feature>
<feature type="cross-link" description="Glycyl lysine isopeptide (Lys-Gly) (interchain with G-Cter in SUMO2)" evidence="1">
    <location>
        <position position="221"/>
    </location>
</feature>
<gene>
    <name type="primary">SNRPA1</name>
    <name type="ORF">QtsA-11112</name>
</gene>
<name>RU2A_MACFA</name>
<reference key="1">
    <citation type="submission" date="2005-06" db="EMBL/GenBank/DDBJ databases">
        <title>DNA sequences of macaque genes expressed in brain or testis and its evolutionary implications.</title>
        <authorList>
            <consortium name="International consortium for macaque cDNA sequencing and analysis"/>
        </authorList>
    </citation>
    <scope>NUCLEOTIDE SEQUENCE [LARGE SCALE MRNA]</scope>
    <source>
        <tissue>Testis</tissue>
    </source>
</reference>
<comment type="function">
    <text evidence="1">Involved in pre-mRNA splicing as component of the spliceosome. Associated with sn-RNP U2, where it contributes to the binding of stem loop IV of U2 snRNA.</text>
</comment>
<comment type="subunit">
    <text evidence="1">Identified in the spliceosome B complex. Identified in the spliceosome C complex. Found in a pre-mRNA splicing complex with SFRS4, SFRS5, SNRNP70, SNRPA1, SRRM1 and SRRM2. Found in a pre-mRNA exonic splicing enhancer (ESE) complex with SNRNP70, SNRPA1, SRRM1 and TRA2B. Contributes to the binding of stem loop IV of U2 snRNA with SNRPB2.</text>
</comment>
<comment type="subcellular location">
    <subcellularLocation>
        <location evidence="1">Nucleus</location>
    </subcellularLocation>
</comment>
<comment type="similarity">
    <text evidence="3">Belongs to the U2 small nuclear ribonucleoprotein A family.</text>
</comment>
<proteinExistence type="evidence at transcript level"/>
<accession>Q4R8Y8</accession>
<organism>
    <name type="scientific">Macaca fascicularis</name>
    <name type="common">Crab-eating macaque</name>
    <name type="synonym">Cynomolgus monkey</name>
    <dbReference type="NCBI Taxonomy" id="9541"/>
    <lineage>
        <taxon>Eukaryota</taxon>
        <taxon>Metazoa</taxon>
        <taxon>Chordata</taxon>
        <taxon>Craniata</taxon>
        <taxon>Vertebrata</taxon>
        <taxon>Euteleostomi</taxon>
        <taxon>Mammalia</taxon>
        <taxon>Eutheria</taxon>
        <taxon>Euarchontoglires</taxon>
        <taxon>Primates</taxon>
        <taxon>Haplorrhini</taxon>
        <taxon>Catarrhini</taxon>
        <taxon>Cercopithecidae</taxon>
        <taxon>Cercopithecinae</taxon>
        <taxon>Macaca</taxon>
    </lineage>
</organism>
<sequence>MVKLTAELIEQAAQYTNAVRDRELDLRGYKIPVIENLGATLDQFDAIDFSDNEIRKLDGFPLLRRLKTLLVNNNRICRIGEGLDQALPCLTELILTNNSLVELGDLDPLASLKSLTYLSILRNPVTNKKHYRLYVIYKVPQVRVLDFQKVKLKERQEAEKMFKGKRGAQLAKDIARRSKTFNPGAGLPTDKKKGGPSPGDVEAIKNAIANASTLAEVERLKGLLQSGQIPGRERRSGPTDDGEEEMEEDTVTNGS</sequence>
<keyword id="KW-0007">Acetylation</keyword>
<keyword id="KW-1017">Isopeptide bond</keyword>
<keyword id="KW-0433">Leucine-rich repeat</keyword>
<keyword id="KW-0507">mRNA processing</keyword>
<keyword id="KW-0508">mRNA splicing</keyword>
<keyword id="KW-0539">Nucleus</keyword>
<keyword id="KW-0597">Phosphoprotein</keyword>
<keyword id="KW-1185">Reference proteome</keyword>
<keyword id="KW-0677">Repeat</keyword>
<keyword id="KW-0687">Ribonucleoprotein</keyword>
<keyword id="KW-0694">RNA-binding</keyword>
<keyword id="KW-0747">Spliceosome</keyword>
<keyword id="KW-0832">Ubl conjugation</keyword>